<name>RPB1A_TRYBB</name>
<accession>P17546</accession>
<feature type="chain" id="PRO_0000073932" description="DNA-directed RNA polymerase II subunit RPB1-A">
    <location>
        <begin position="1"/>
        <end position="1766"/>
    </location>
</feature>
<feature type="region of interest" description="Bridging helix">
    <location>
        <begin position="813"/>
        <end position="825"/>
    </location>
</feature>
<feature type="region of interest" description="Disordered" evidence="2">
    <location>
        <begin position="1660"/>
        <end position="1766"/>
    </location>
</feature>
<feature type="compositionally biased region" description="Basic and acidic residues" evidence="2">
    <location>
        <begin position="1706"/>
        <end position="1716"/>
    </location>
</feature>
<feature type="compositionally biased region" description="Low complexity" evidence="2">
    <location>
        <begin position="1742"/>
        <end position="1756"/>
    </location>
</feature>
<feature type="binding site" evidence="1">
    <location>
        <position position="69"/>
    </location>
    <ligand>
        <name>Zn(2+)</name>
        <dbReference type="ChEBI" id="CHEBI:29105"/>
    </ligand>
</feature>
<feature type="binding site" evidence="1">
    <location>
        <position position="72"/>
    </location>
    <ligand>
        <name>Zn(2+)</name>
        <dbReference type="ChEBI" id="CHEBI:29105"/>
    </ligand>
</feature>
<feature type="binding site" evidence="1">
    <location>
        <position position="79"/>
    </location>
    <ligand>
        <name>Zn(2+)</name>
        <dbReference type="ChEBI" id="CHEBI:29105"/>
    </ligand>
</feature>
<feature type="binding site" evidence="1">
    <location>
        <position position="82"/>
    </location>
    <ligand>
        <name>Zn(2+)</name>
        <dbReference type="ChEBI" id="CHEBI:29105"/>
    </ligand>
</feature>
<feature type="binding site" evidence="1">
    <location>
        <position position="487"/>
    </location>
    <ligand>
        <name>Mg(2+)</name>
        <dbReference type="ChEBI" id="CHEBI:18420"/>
        <label>1</label>
        <note>catalytic</note>
    </ligand>
</feature>
<feature type="binding site" evidence="1">
    <location>
        <position position="487"/>
    </location>
    <ligand>
        <name>Mg(2+)</name>
        <dbReference type="ChEBI" id="CHEBI:18420"/>
        <label>2</label>
        <note>ligand shared with RPB2</note>
    </ligand>
</feature>
<feature type="binding site" evidence="1">
    <location>
        <position position="489"/>
    </location>
    <ligand>
        <name>Mg(2+)</name>
        <dbReference type="ChEBI" id="CHEBI:18420"/>
        <label>1</label>
        <note>catalytic</note>
    </ligand>
</feature>
<feature type="binding site" evidence="1">
    <location>
        <position position="489"/>
    </location>
    <ligand>
        <name>Mg(2+)</name>
        <dbReference type="ChEBI" id="CHEBI:18420"/>
        <label>2</label>
        <note>ligand shared with RPB2</note>
    </ligand>
</feature>
<feature type="binding site" evidence="1">
    <location>
        <position position="491"/>
    </location>
    <ligand>
        <name>Mg(2+)</name>
        <dbReference type="ChEBI" id="CHEBI:18420"/>
        <label>1</label>
        <note>catalytic</note>
    </ligand>
</feature>
<feature type="sequence variant" description="In trypanosome isolates." evidence="3">
    <original>V</original>
    <variation>M</variation>
    <location>
        <position position="131"/>
    </location>
</feature>
<feature type="sequence variant" description="In trypanosome isolates." evidence="3">
    <original>S</original>
    <variation>N</variation>
    <location>
        <position position="472"/>
    </location>
</feature>
<dbReference type="EC" id="2.7.7.6"/>
<dbReference type="EMBL" id="X13491">
    <property type="protein sequence ID" value="CAA31846.1"/>
    <property type="molecule type" value="Genomic_DNA"/>
</dbReference>
<dbReference type="PIR" id="A31875">
    <property type="entry name" value="A31875"/>
</dbReference>
<dbReference type="SMR" id="P17546"/>
<dbReference type="GO" id="GO:0005739">
    <property type="term" value="C:mitochondrion"/>
    <property type="evidence" value="ECO:0007669"/>
    <property type="project" value="GOC"/>
</dbReference>
<dbReference type="GO" id="GO:0009536">
    <property type="term" value="C:plastid"/>
    <property type="evidence" value="ECO:0007669"/>
    <property type="project" value="GOC"/>
</dbReference>
<dbReference type="GO" id="GO:0005665">
    <property type="term" value="C:RNA polymerase II, core complex"/>
    <property type="evidence" value="ECO:0007669"/>
    <property type="project" value="TreeGrafter"/>
</dbReference>
<dbReference type="GO" id="GO:0003677">
    <property type="term" value="F:DNA binding"/>
    <property type="evidence" value="ECO:0007669"/>
    <property type="project" value="UniProtKB-KW"/>
</dbReference>
<dbReference type="GO" id="GO:0003899">
    <property type="term" value="F:DNA-directed RNA polymerase activity"/>
    <property type="evidence" value="ECO:0007669"/>
    <property type="project" value="UniProtKB-EC"/>
</dbReference>
<dbReference type="GO" id="GO:0046872">
    <property type="term" value="F:metal ion binding"/>
    <property type="evidence" value="ECO:0007669"/>
    <property type="project" value="UniProtKB-KW"/>
</dbReference>
<dbReference type="GO" id="GO:0006351">
    <property type="term" value="P:DNA-templated transcription"/>
    <property type="evidence" value="ECO:0007669"/>
    <property type="project" value="InterPro"/>
</dbReference>
<dbReference type="CDD" id="cd02733">
    <property type="entry name" value="RNAP_II_RPB1_N"/>
    <property type="match status" value="1"/>
</dbReference>
<dbReference type="FunFam" id="2.40.40.20:FF:000019">
    <property type="entry name" value="DNA-directed RNA polymerase II subunit RPB1"/>
    <property type="match status" value="1"/>
</dbReference>
<dbReference type="FunFam" id="1.10.150.390:FF:000001">
    <property type="entry name" value="DNA-directed RNA polymerase subunit"/>
    <property type="match status" value="1"/>
</dbReference>
<dbReference type="FunFam" id="1.10.274.100:FF:000013">
    <property type="entry name" value="DNA-directed RNA polymerase subunit"/>
    <property type="match status" value="1"/>
</dbReference>
<dbReference type="FunFam" id="3.30.1490.180:FF:000006">
    <property type="entry name" value="DNA-directed RNA polymerase subunit"/>
    <property type="match status" value="1"/>
</dbReference>
<dbReference type="Gene3D" id="1.10.132.30">
    <property type="match status" value="1"/>
</dbReference>
<dbReference type="Gene3D" id="1.10.150.390">
    <property type="match status" value="1"/>
</dbReference>
<dbReference type="Gene3D" id="2.40.40.20">
    <property type="match status" value="1"/>
</dbReference>
<dbReference type="Gene3D" id="3.30.1360.140">
    <property type="match status" value="1"/>
</dbReference>
<dbReference type="Gene3D" id="6.10.250.2940">
    <property type="match status" value="1"/>
</dbReference>
<dbReference type="Gene3D" id="6.20.50.80">
    <property type="match status" value="1"/>
</dbReference>
<dbReference type="Gene3D" id="3.30.1490.180">
    <property type="entry name" value="RNA polymerase ii"/>
    <property type="match status" value="1"/>
</dbReference>
<dbReference type="Gene3D" id="4.10.860.120">
    <property type="entry name" value="RNA polymerase II, clamp domain"/>
    <property type="match status" value="1"/>
</dbReference>
<dbReference type="Gene3D" id="1.10.274.100">
    <property type="entry name" value="RNA polymerase Rpb1, domain 3"/>
    <property type="match status" value="1"/>
</dbReference>
<dbReference type="InterPro" id="IPR045867">
    <property type="entry name" value="DNA-dir_RpoC_beta_prime"/>
</dbReference>
<dbReference type="InterPro" id="IPR000722">
    <property type="entry name" value="RNA_pol_asu"/>
</dbReference>
<dbReference type="InterPro" id="IPR006592">
    <property type="entry name" value="RNA_pol_N"/>
</dbReference>
<dbReference type="InterPro" id="IPR007080">
    <property type="entry name" value="RNA_pol_Rpb1_1"/>
</dbReference>
<dbReference type="InterPro" id="IPR007066">
    <property type="entry name" value="RNA_pol_Rpb1_3"/>
</dbReference>
<dbReference type="InterPro" id="IPR042102">
    <property type="entry name" value="RNA_pol_Rpb1_3_sf"/>
</dbReference>
<dbReference type="InterPro" id="IPR007083">
    <property type="entry name" value="RNA_pol_Rpb1_4"/>
</dbReference>
<dbReference type="InterPro" id="IPR007081">
    <property type="entry name" value="RNA_pol_Rpb1_5"/>
</dbReference>
<dbReference type="InterPro" id="IPR007075">
    <property type="entry name" value="RNA_pol_Rpb1_6"/>
</dbReference>
<dbReference type="InterPro" id="IPR007073">
    <property type="entry name" value="RNA_pol_Rpb1_7"/>
</dbReference>
<dbReference type="InterPro" id="IPR038593">
    <property type="entry name" value="RNA_pol_Rpb1_7_sf"/>
</dbReference>
<dbReference type="InterPro" id="IPR044893">
    <property type="entry name" value="RNA_pol_Rpb1_clamp_domain"/>
</dbReference>
<dbReference type="InterPro" id="IPR038120">
    <property type="entry name" value="Rpb1_funnel_sf"/>
</dbReference>
<dbReference type="PANTHER" id="PTHR19376">
    <property type="entry name" value="DNA-DIRECTED RNA POLYMERASE"/>
    <property type="match status" value="1"/>
</dbReference>
<dbReference type="PANTHER" id="PTHR19376:SF37">
    <property type="entry name" value="DNA-DIRECTED RNA POLYMERASE II SUBUNIT RPB1"/>
    <property type="match status" value="1"/>
</dbReference>
<dbReference type="Pfam" id="PF04997">
    <property type="entry name" value="RNA_pol_Rpb1_1"/>
    <property type="match status" value="1"/>
</dbReference>
<dbReference type="Pfam" id="PF00623">
    <property type="entry name" value="RNA_pol_Rpb1_2"/>
    <property type="match status" value="1"/>
</dbReference>
<dbReference type="Pfam" id="PF04983">
    <property type="entry name" value="RNA_pol_Rpb1_3"/>
    <property type="match status" value="1"/>
</dbReference>
<dbReference type="Pfam" id="PF05000">
    <property type="entry name" value="RNA_pol_Rpb1_4"/>
    <property type="match status" value="1"/>
</dbReference>
<dbReference type="Pfam" id="PF04998">
    <property type="entry name" value="RNA_pol_Rpb1_5"/>
    <property type="match status" value="1"/>
</dbReference>
<dbReference type="Pfam" id="PF04992">
    <property type="entry name" value="RNA_pol_Rpb1_6"/>
    <property type="match status" value="1"/>
</dbReference>
<dbReference type="Pfam" id="PF04990">
    <property type="entry name" value="RNA_pol_Rpb1_7"/>
    <property type="match status" value="1"/>
</dbReference>
<dbReference type="SMART" id="SM00663">
    <property type="entry name" value="RPOLA_N"/>
    <property type="match status" value="1"/>
</dbReference>
<dbReference type="SUPFAM" id="SSF64484">
    <property type="entry name" value="beta and beta-prime subunits of DNA dependent RNA-polymerase"/>
    <property type="match status" value="1"/>
</dbReference>
<comment type="function">
    <text evidence="1 3">DNA-dependent RNA polymerase catalyzes the transcription of DNA into RNA using the four ribonucleoside triphosphates as substrates. Largest and catalytic component of RNA polymerase II which synthesizes mRNA precursors and many functional non-coding RNAs. Forms the polymerase active center together with the second largest subunit. Pol II is the central component of the basal RNA polymerase II transcription machinery. It is composed of mobile elements that move relative to each other. RPB1 is part of the core element with the central large cleft, the clamp element that moves to open and close the cleft and the jaws that are thought to grab the incoming DNA template. At the start of transcription, a single-stranded DNA template strand of the promoter is positioned within the central active site cleft of Pol II. A bridging helix emanates from RPB1 and crosses the cleft near the catalytic site and is thought to promote translocation of Pol II by acting as a ratchet that moves the RNA-DNA hybrid through the active site by switching from straight to bent conformations at each step of nucleotide addition. During transcription elongation, Pol II moves on the template as the transcript elongates (By similarity).</text>
</comment>
<comment type="catalytic activity">
    <reaction>
        <text>RNA(n) + a ribonucleoside 5'-triphosphate = RNA(n+1) + diphosphate</text>
        <dbReference type="Rhea" id="RHEA:21248"/>
        <dbReference type="Rhea" id="RHEA-COMP:14527"/>
        <dbReference type="Rhea" id="RHEA-COMP:17342"/>
        <dbReference type="ChEBI" id="CHEBI:33019"/>
        <dbReference type="ChEBI" id="CHEBI:61557"/>
        <dbReference type="ChEBI" id="CHEBI:140395"/>
        <dbReference type="EC" id="2.7.7.6"/>
    </reaction>
</comment>
<comment type="subunit">
    <text evidence="1">Component of the RNA polymerase II (Pol II) complex consisting of 12 subunits.</text>
</comment>
<comment type="subcellular location">
    <subcellularLocation>
        <location>Nucleus</location>
    </subcellularLocation>
</comment>
<comment type="miscellaneous">
    <text>The binding of ribonucleoside triphosphate to the RNA polymerase II transcribing complex probably involves a two-step mechanism. The initial binding seems to occur at the entry (E) site and involves a magnesium ion temporarily coordinated by three conserved aspartate residues of the two largest RNA Pol II subunits. The ribonucleoside triphosphate is transferred by a rotation to the nucleotide addition (A) site for pairing with the template DNA. The catalytic A site involves three conserved aspartate residues of the RNA Pol II largest subunit which permanently coordinate a second magnesium ion.</text>
</comment>
<comment type="miscellaneous">
    <text>Trypanosoma brucei contains two genes for the Pol II largest subunit. The presence of both, polIIA and polIIB genes, is not essential for viability and neither of the genes seem not to confer to alpha-amanitin-resistant transcription.</text>
</comment>
<comment type="similarity">
    <text evidence="4">Belongs to the RNA polymerase beta' chain family.</text>
</comment>
<comment type="caution">
    <text evidence="4">Protein purification and mass spectrometry by PubMed:16962183 do not differentiate between the TRP4.8/polIIA and TRP5.9/polIIB gene products.</text>
</comment>
<gene>
    <name type="primary">TRP4.8</name>
    <name type="synonym">polIIA</name>
</gene>
<keyword id="KW-0238">DNA-binding</keyword>
<keyword id="KW-0240">DNA-directed RNA polymerase</keyword>
<keyword id="KW-0460">Magnesium</keyword>
<keyword id="KW-0479">Metal-binding</keyword>
<keyword id="KW-0548">Nucleotidyltransferase</keyword>
<keyword id="KW-0539">Nucleus</keyword>
<keyword id="KW-0804">Transcription</keyword>
<keyword id="KW-0808">Transferase</keyword>
<keyword id="KW-0862">Zinc</keyword>
<evidence type="ECO:0000250" key="1"/>
<evidence type="ECO:0000256" key="2">
    <source>
        <dbReference type="SAM" id="MobiDB-lite"/>
    </source>
</evidence>
<evidence type="ECO:0000269" key="3">
    <source>
    </source>
</evidence>
<evidence type="ECO:0000305" key="4"/>
<sequence>MSGGAALPVSQMELHKVNEVQFEIFKERQIKSYAVCLVEHAKSYANAADQSGEASMICVWVPLTSNSACETCHRKHPECPGHFGYIELAEPVFNIGVFDLVLLVLKCVCKTCGALLLNTREQDVHKKLQHVTGLNRLRQVAKMAEAKCRVSTSTEDDMGIDGFDSAPFNGGSGMGPGATRGCGASQPRVSRFYGIYPTLVIKAVHEEQDAEWHADKVRQVLDRVSDDDARLMGFDPQRCHPRDLVLTVLPVPPPQVRPAISFGGLRSDDELTHQIMSIVKRNNQLRRDKESDVQAAIDRSRALLQEHVATYFNNASTYYKPTKVNDTKKLKSLTERLKGKYGRLRGNLMGKRVDFSARTVITGDPNIDVDEVGVPFSVAMTLTFPERVNTVNKKRLTEFARRTVYPSANYIHHPNGTITKLALLRDRSKVTLNIGDVVERHVINGDVVLFNRQPTLHRMSMMGHRVRVLNYSTFRLNLSCTTPYNADFDGDEMNLHVPQSLLTKAELIEMMMVPKNFVSPNKSAPCMGIVQDSLLGSYRLTDKDTFLDKYFVQSVALWLDLWQLPIPAILKPRPLWTGKQVFSLILPEVNHPATPQDRPPFPHNDSVVMIRRGQLLCGPITKSIVGAAPGSLIHVIFNEHGSDEVARFINGVQRVTTFFLLNFGFSVGVQDTVADSDTLRQMNDVLVKTRRNVEKIGAAANNRTLNRKAGMTLLQSFEADVNSALNKCREEAAKKALSNVRRTNSFKVMIEAGSKGTDLNICQIAVFVGQQNVAGSRIPFGFRRRTLPHFMLDDYGETSRGMANRGYVEGLKPHEFFFHTMAGREGLIDTAVKTSDTGYLQRKLIKALEDVHAAYDGTVRNANDELIQFMYGEDGLDGARIEGGQLFPLPFRDDKEMEDTYKYEYDVDGTFSGKVGGNYMDPHVRKMLRADPQNVRKLQEEYEQLTADREWSRKMLDLEDRDKLKLNLPVNPGRLIQNARSTMGKRSQVSNLSPITIIDHVRKLQEDLMKLFPSYHRGGDGYIRNTLSRERIESALTLFNVHLRQLLASKRVLKEYKLNDRAFEYLLKEIRTKYHQSLTTPGENIGAIAAQSCGEPATQMTLNTFHNAGISSKNVTLGVPRLLELLNVSRNQKHASMTVSLFPPYDEKRNAQKAQHLIEYCTLESITRRIQFIYDPDPRHTVVEADRDILELEWNVMDESDAELRIQEVVAGSPWVVRLELDVDMVTDKALDMKDVKQAILRVDESYIIETGMANNVRQRTIRMRSRYNEGADSIPKLKREIPALLARVHLRGIPGVRRALLKDTTEFTVDQATGKMSGNKIWAIDTDGTALRRAFIGVVGEDGKNIINAVKTSSNKVPEVCSLLGIEAARSKMLTELREAYLAYGLNINYRHYTILVDTICQHGYLMAVSRSGINRSDTSGPLMRCSFEETVKVLMAAASFGECDPVRGVSANLVLGNQARVGTGLFDLVLNMAALQQAVPQAEAVAPGKDVNVYHSLGSTLQQNIQSSIAYRPRDHDATPFVNNASLFLRQGFGGGSSSAPVTASAPYNPSTTYHGGRLEASAVHRSQAYSTSPALEYGGREASASQMYSVMSSASAFNPVSTRMSSVAHSYSEYSEASSYHLQHSVAPTSMQASLPRTDNSMTMQGIGSVSVPYTPHAMSSAAPPSQVYASTEVGRSHSEDSRSQSALYVPTLSPTHAGYAIRGDEPSTHRSDSNVMWREAGGGREQDEEDDLSTNYMPTAKTPQQAAPPTAAEFGDEEEEEQ</sequence>
<protein>
    <recommendedName>
        <fullName>DNA-directed RNA polymerase II subunit RPB1-A</fullName>
        <shortName>RNA polymerase II subunit B1-A</shortName>
        <ecNumber>2.7.7.6</ecNumber>
    </recommendedName>
    <alternativeName>
        <fullName>DNA-directed RNA polymerase II largest subunit A</fullName>
    </alternativeName>
</protein>
<organism>
    <name type="scientific">Trypanosoma brucei brucei</name>
    <dbReference type="NCBI Taxonomy" id="5702"/>
    <lineage>
        <taxon>Eukaryota</taxon>
        <taxon>Discoba</taxon>
        <taxon>Euglenozoa</taxon>
        <taxon>Kinetoplastea</taxon>
        <taxon>Metakinetoplastina</taxon>
        <taxon>Trypanosomatida</taxon>
        <taxon>Trypanosomatidae</taxon>
        <taxon>Trypanosoma</taxon>
    </lineage>
</organism>
<reference key="1">
    <citation type="journal article" date="1989" name="Cell">
        <title>Trypanosoma brucei contains two RNA polymerase II largest subunit genes with an altered C-terminal domain.</title>
        <authorList>
            <person name="Evers R."/>
            <person name="Hammer A."/>
            <person name="Koeck J."/>
            <person name="Waldemar J."/>
            <person name="Borst P."/>
            <person name="Memet S."/>
            <person name="Cornelissen A.W.C.A."/>
        </authorList>
    </citation>
    <scope>NUCLEOTIDE SEQUENCE [GENOMIC DNA]</scope>
</reference>
<reference key="2">
    <citation type="journal article" date="1993" name="Mol. Cell. Biol.">
        <title>Disruption of largest subunit RNA polymerase II genes in Trypanosoma brucei.</title>
        <authorList>
            <person name="Chung H.M."/>
            <person name="Lee M.G."/>
            <person name="Dietrich P."/>
            <person name="Huang J."/>
            <person name="Van der Ploeg L.H.T."/>
        </authorList>
    </citation>
    <scope>FUNCTION</scope>
    <scope>VARIANTS MET-131 AND ASN-472</scope>
</reference>
<reference key="3">
    <citation type="journal article" date="2006" name="Mol. Biochem. Parasitol.">
        <title>Biochemical characterization of Trypanosoma brucei RNA polymerase II.</title>
        <authorList>
            <person name="Das A."/>
            <person name="Li H."/>
            <person name="Liu T."/>
            <person name="Bellofatto V."/>
        </authorList>
    </citation>
    <scope>IDENTIFICATION IN THE RNA POLYMERASE II COMPLEX</scope>
    <scope>IDENTIFICATION BY MASS SPECTROMETRY</scope>
</reference>
<proteinExistence type="evidence at protein level"/>